<name>VU4_ELHVK</name>
<evidence type="ECO:0000305" key="1"/>
<reference key="1">
    <citation type="journal article" date="2007" name="J. Virol.">
        <title>Identification of novel rodent herpesviruses, including the first gammaherpesvirus of Mus musculus.</title>
        <authorList>
            <person name="Ehlers B."/>
            <person name="Kuchler J."/>
            <person name="Yasmum N."/>
            <person name="Dural G."/>
            <person name="Voigt S."/>
            <person name="Schmidt-Chanasit J."/>
            <person name="Jakel T."/>
            <person name="Matuschka F.R."/>
            <person name="Richter D."/>
            <person name="Essbauer S."/>
            <person name="Hughes D.J."/>
            <person name="Summers C."/>
            <person name="Bennett M."/>
            <person name="Stewart J.P."/>
            <person name="Ulrich R.G."/>
        </authorList>
    </citation>
    <scope>NUCLEOTIDE SEQUENCE [GENOMIC DNA]</scope>
</reference>
<reference key="2">
    <citation type="journal article" date="2001" name="J. Gen. Virol.">
        <title>Genetic and ultrastructural characterization of a European isolate of the fatal endotheliotropic elephant herpesvirus.</title>
        <authorList>
            <person name="Ehlers B."/>
            <person name="Burkhardt S."/>
            <person name="Goltz M."/>
            <person name="Bergmann V."/>
            <person name="Ochs A."/>
            <person name="Weiler H."/>
            <person name="Hentschke J."/>
        </authorList>
    </citation>
    <scope>NUCLEOTIDE SEQUENCE [GENOMIC DNA]</scope>
</reference>
<sequence length="520" mass="60724">MQSLYNSKYAHIFKGPVAKHVTYKFHDLEVTYANIPHLDITVENITPDMIYKSAHLTCSSLFRMYGLSPETDGKLWVLLYRLFTVNEGSYDHRNTIGLELYINHLTAMYEELKVKSELLACVNFALGLGYFYMSYFVMYNHKKGNLLNYLHELCHVIHRYIDQIRLLHMRNPNNYKIEEFMRILRDVFKHYRISQFYDHVMYNHIFGLTRIVSNILCGCSSVCKEHYSIKDRDKSVRGIKTRVKPASAGQSPVLSIPVGFYVNQAISIKTRFPTTGPELFGQAENVIGILRSPVLYHVSQDDVAKIEMCLKTDFYMTEFYNNKEANNYIIPIQSPGCREQEEMMLKLFNNVVFCMYLACQVRQVILSQWKILLTLFRNQFLKIVSLMKGDSFIKICIERLADDIQHHRQSLGAVFKAFLTILPDVLKHVGFPVNDSNALRAHLLVEYLVDDKFAPEIPYDTYVRMARDYRLEILRGNRMPFPIFTLDLAETRNLIFSNEAFHAFYNVISYDDIIPNYSSF</sequence>
<protein>
    <recommendedName>
        <fullName>Protein U4</fullName>
    </recommendedName>
</protein>
<organism>
    <name type="scientific">Elephantid herpesvirus 1 (isolate Asian elephant/Berlin/Kiba/1998)</name>
    <name type="common">EIHV-1</name>
    <name type="synonym">Elephant endotheliotropic herpesvirus</name>
    <dbReference type="NCBI Taxonomy" id="654902"/>
    <lineage>
        <taxon>Viruses</taxon>
        <taxon>Duplodnaviria</taxon>
        <taxon>Heunggongvirae</taxon>
        <taxon>Peploviricota</taxon>
        <taxon>Herviviricetes</taxon>
        <taxon>Herpesvirales</taxon>
        <taxon>Orthoherpesviridae</taxon>
        <taxon>Betaherpesvirinae</taxon>
        <taxon>Proboscivirus</taxon>
        <taxon>Proboscivirus elephantidbeta1</taxon>
        <taxon>Elephantid herpesvirus 1</taxon>
    </lineage>
</organism>
<comment type="similarity">
    <text evidence="1">Belongs to the herpesviridae U4 family.</text>
</comment>
<organismHost>
    <name type="scientific">Elephas maximus</name>
    <name type="common">Indian elephant</name>
    <dbReference type="NCBI Taxonomy" id="9783"/>
</organismHost>
<organismHost>
    <name type="scientific">Loxodonta africana</name>
    <name type="common">African elephant</name>
    <dbReference type="NCBI Taxonomy" id="9785"/>
</organismHost>
<organismHost>
    <name type="scientific">Loxodonta cyclotis</name>
    <name type="common">African forest elephant</name>
    <dbReference type="NCBI Taxonomy" id="99490"/>
</organismHost>
<accession>Q18LF3</accession>
<feature type="chain" id="PRO_0000408179" description="Protein U4">
    <location>
        <begin position="1"/>
        <end position="520"/>
    </location>
</feature>
<proteinExistence type="inferred from homology"/>
<dbReference type="EMBL" id="AF322977">
    <property type="protein sequence ID" value="ABG36566.1"/>
    <property type="molecule type" value="Genomic_DNA"/>
</dbReference>
<dbReference type="RefSeq" id="YP_007969823.1">
    <property type="nucleotide sequence ID" value="NC_020474.2"/>
</dbReference>
<dbReference type="GeneID" id="15486247"/>
<dbReference type="KEGG" id="vg:15486247"/>